<organism>
    <name type="scientific">Mus musculus</name>
    <name type="common">Mouse</name>
    <dbReference type="NCBI Taxonomy" id="10090"/>
    <lineage>
        <taxon>Eukaryota</taxon>
        <taxon>Metazoa</taxon>
        <taxon>Chordata</taxon>
        <taxon>Craniata</taxon>
        <taxon>Vertebrata</taxon>
        <taxon>Euteleostomi</taxon>
        <taxon>Mammalia</taxon>
        <taxon>Eutheria</taxon>
        <taxon>Euarchontoglires</taxon>
        <taxon>Glires</taxon>
        <taxon>Rodentia</taxon>
        <taxon>Myomorpha</taxon>
        <taxon>Muroidea</taxon>
        <taxon>Muridae</taxon>
        <taxon>Murinae</taxon>
        <taxon>Mus</taxon>
        <taxon>Mus</taxon>
    </lineage>
</organism>
<keyword id="KW-0007">Acetylation</keyword>
<keyword id="KW-0009">Actin-binding</keyword>
<keyword id="KW-0037">Angiogenesis</keyword>
<keyword id="KW-0130">Cell adhesion</keyword>
<keyword id="KW-0965">Cell junction</keyword>
<keyword id="KW-1003">Cell membrane</keyword>
<keyword id="KW-0133">Cell shape</keyword>
<keyword id="KW-0145">Chemotaxis</keyword>
<keyword id="KW-0970">Cilium biogenesis/degradation</keyword>
<keyword id="KW-0963">Cytoplasm</keyword>
<keyword id="KW-0206">Cytoskeleton</keyword>
<keyword id="KW-0472">Membrane</keyword>
<keyword id="KW-0597">Phosphoprotein</keyword>
<keyword id="KW-1185">Reference proteome</keyword>
<keyword id="KW-0677">Repeat</keyword>
<accession>Q9EPC1</accession>
<accession>Q9JJ65</accession>
<gene>
    <name type="primary">Parva</name>
    <name type="synonym">Actp</name>
    <name type="ORF">MNCb-0301</name>
</gene>
<protein>
    <recommendedName>
        <fullName>Alpha-parvin</fullName>
    </recommendedName>
    <alternativeName>
        <fullName>Actopaxin</fullName>
    </alternativeName>
</protein>
<feature type="initiator methionine" description="Removed" evidence="8">
    <location>
        <position position="1"/>
    </location>
</feature>
<feature type="chain" id="PRO_0000121581" description="Alpha-parvin">
    <location>
        <begin position="2"/>
        <end position="372"/>
    </location>
</feature>
<feature type="domain" description="Calponin-homology (CH) 1" evidence="2">
    <location>
        <begin position="95"/>
        <end position="202"/>
    </location>
</feature>
<feature type="domain" description="Calponin-homology (CH) 2" evidence="2">
    <location>
        <begin position="262"/>
        <end position="369"/>
    </location>
</feature>
<feature type="region of interest" description="Disordered" evidence="3">
    <location>
        <begin position="1"/>
        <end position="31"/>
    </location>
</feature>
<feature type="region of interest" description="Interaction with ARHGAP31" evidence="5">
    <location>
        <begin position="21"/>
        <end position="25"/>
    </location>
</feature>
<feature type="region of interest" description="Required for interaction with TESK1 and ILK" evidence="1">
    <location>
        <begin position="223"/>
        <end position="372"/>
    </location>
</feature>
<feature type="modified residue" description="N-acetylalanine" evidence="8">
    <location>
        <position position="2"/>
    </location>
</feature>
<feature type="modified residue" description="Phosphoserine" evidence="8">
    <location>
        <position position="8"/>
    </location>
</feature>
<feature type="modified residue" description="Phosphoserine" evidence="8">
    <location>
        <position position="14"/>
    </location>
</feature>
<feature type="modified residue" description="Phosphoserine" evidence="8">
    <location>
        <position position="19"/>
    </location>
</feature>
<feature type="modified residue" description="Phosphoserine" evidence="1">
    <location>
        <position position="28"/>
    </location>
</feature>
<feature type="modified residue" description="Phosphoserine" evidence="1">
    <location>
        <position position="62"/>
    </location>
</feature>
<feature type="sequence conflict" description="In Ref. 3; BAA97981." evidence="7" ref="3">
    <original>L</original>
    <variation>H</variation>
    <location>
        <position position="33"/>
    </location>
</feature>
<feature type="sequence conflict" description="In Ref. 3; BAA97981." evidence="7" ref="3">
    <original>F</original>
    <variation>S</variation>
    <location>
        <position position="66"/>
    </location>
</feature>
<name>PARVA_MOUSE</name>
<evidence type="ECO:0000250" key="1">
    <source>
        <dbReference type="UniProtKB" id="Q9NVD7"/>
    </source>
</evidence>
<evidence type="ECO:0000255" key="2">
    <source>
        <dbReference type="PROSITE-ProRule" id="PRU00044"/>
    </source>
</evidence>
<evidence type="ECO:0000256" key="3">
    <source>
        <dbReference type="SAM" id="MobiDB-lite"/>
    </source>
</evidence>
<evidence type="ECO:0000269" key="4">
    <source>
    </source>
</evidence>
<evidence type="ECO:0000269" key="5">
    <source>
    </source>
</evidence>
<evidence type="ECO:0000269" key="6">
    <source>
    </source>
</evidence>
<evidence type="ECO:0000305" key="7"/>
<evidence type="ECO:0007744" key="8">
    <source>
    </source>
</evidence>
<dbReference type="EMBL" id="AF237774">
    <property type="protein sequence ID" value="AAG27175.1"/>
    <property type="molecule type" value="mRNA"/>
</dbReference>
<dbReference type="EMBL" id="AF264766">
    <property type="protein sequence ID" value="AAG09803.1"/>
    <property type="molecule type" value="mRNA"/>
</dbReference>
<dbReference type="EMBL" id="AB045321">
    <property type="protein sequence ID" value="BAA97981.1"/>
    <property type="molecule type" value="mRNA"/>
</dbReference>
<dbReference type="EMBL" id="BC059236">
    <property type="protein sequence ID" value="AAH59236.1"/>
    <property type="molecule type" value="mRNA"/>
</dbReference>
<dbReference type="CCDS" id="CCDS40091.1"/>
<dbReference type="RefSeq" id="NP_065631.3">
    <property type="nucleotide sequence ID" value="NM_020606.5"/>
</dbReference>
<dbReference type="BMRB" id="Q9EPC1"/>
<dbReference type="SMR" id="Q9EPC1"/>
<dbReference type="BioGRID" id="208263">
    <property type="interactions" value="14"/>
</dbReference>
<dbReference type="CORUM" id="Q9EPC1"/>
<dbReference type="DIP" id="DIP-57658N"/>
<dbReference type="FunCoup" id="Q9EPC1">
    <property type="interactions" value="1269"/>
</dbReference>
<dbReference type="IntAct" id="Q9EPC1">
    <property type="interactions" value="3"/>
</dbReference>
<dbReference type="MINT" id="Q9EPC1"/>
<dbReference type="STRING" id="10090.ENSMUSP00000033030"/>
<dbReference type="GlyGen" id="Q9EPC1">
    <property type="glycosylation" value="2 sites, 1 N-linked glycan (1 site), 1 O-linked glycan (1 site)"/>
</dbReference>
<dbReference type="iPTMnet" id="Q9EPC1"/>
<dbReference type="PhosphoSitePlus" id="Q9EPC1"/>
<dbReference type="jPOST" id="Q9EPC1"/>
<dbReference type="PaxDb" id="10090-ENSMUSP00000033030"/>
<dbReference type="PeptideAtlas" id="Q9EPC1"/>
<dbReference type="ProteomicsDB" id="287996"/>
<dbReference type="Pumba" id="Q9EPC1"/>
<dbReference type="Antibodypedia" id="993">
    <property type="antibodies" value="471 antibodies from 32 providers"/>
</dbReference>
<dbReference type="DNASU" id="57342"/>
<dbReference type="Ensembl" id="ENSMUST00000033030.14">
    <property type="protein sequence ID" value="ENSMUSP00000033030.8"/>
    <property type="gene ID" value="ENSMUSG00000030770.16"/>
</dbReference>
<dbReference type="Ensembl" id="ENSMUST00000106643.8">
    <property type="protein sequence ID" value="ENSMUSP00000102254.2"/>
    <property type="gene ID" value="ENSMUSG00000030770.16"/>
</dbReference>
<dbReference type="GeneID" id="57342"/>
<dbReference type="KEGG" id="mmu:57342"/>
<dbReference type="UCSC" id="uc009jgt.1">
    <property type="organism name" value="mouse"/>
</dbReference>
<dbReference type="AGR" id="MGI:1931144"/>
<dbReference type="CTD" id="55742"/>
<dbReference type="MGI" id="MGI:1931144">
    <property type="gene designation" value="Parva"/>
</dbReference>
<dbReference type="VEuPathDB" id="HostDB:ENSMUSG00000030770"/>
<dbReference type="eggNOG" id="KOG3631">
    <property type="taxonomic scope" value="Eukaryota"/>
</dbReference>
<dbReference type="GeneTree" id="ENSGT00950000183194"/>
<dbReference type="InParanoid" id="Q9EPC1"/>
<dbReference type="OrthoDB" id="2099265at2759"/>
<dbReference type="PhylomeDB" id="Q9EPC1"/>
<dbReference type="TreeFam" id="TF314025"/>
<dbReference type="Reactome" id="R-MMU-446343">
    <property type="pathway name" value="Localization of the PINCH-ILK-PARVIN complex to focal adhesions"/>
</dbReference>
<dbReference type="Reactome" id="R-MMU-446353">
    <property type="pathway name" value="Cell-extracellular matrix interactions"/>
</dbReference>
<dbReference type="Reactome" id="R-MMU-446388">
    <property type="pathway name" value="Regulation of cytoskeletal remodeling and cell spreading by IPP complex components"/>
</dbReference>
<dbReference type="BioGRID-ORCS" id="57342">
    <property type="hits" value="0 hits in 77 CRISPR screens"/>
</dbReference>
<dbReference type="ChiTaRS" id="Parva">
    <property type="organism name" value="mouse"/>
</dbReference>
<dbReference type="PRO" id="PR:Q9EPC1"/>
<dbReference type="Proteomes" id="UP000000589">
    <property type="component" value="Chromosome 7"/>
</dbReference>
<dbReference type="RNAct" id="Q9EPC1">
    <property type="molecule type" value="protein"/>
</dbReference>
<dbReference type="Bgee" id="ENSMUSG00000030770">
    <property type="expression patterns" value="Expressed in superior cervical ganglion and 264 other cell types or tissues"/>
</dbReference>
<dbReference type="ExpressionAtlas" id="Q9EPC1">
    <property type="expression patterns" value="baseline and differential"/>
</dbReference>
<dbReference type="GO" id="GO:0005737">
    <property type="term" value="C:cytoplasm"/>
    <property type="evidence" value="ECO:0000314"/>
    <property type="project" value="MGI"/>
</dbReference>
<dbReference type="GO" id="GO:0005856">
    <property type="term" value="C:cytoskeleton"/>
    <property type="evidence" value="ECO:0007669"/>
    <property type="project" value="UniProtKB-SubCell"/>
</dbReference>
<dbReference type="GO" id="GO:0005925">
    <property type="term" value="C:focal adhesion"/>
    <property type="evidence" value="ECO:0000314"/>
    <property type="project" value="MGI"/>
</dbReference>
<dbReference type="GO" id="GO:0030027">
    <property type="term" value="C:lamellipodium"/>
    <property type="evidence" value="ECO:0000314"/>
    <property type="project" value="MGI"/>
</dbReference>
<dbReference type="GO" id="GO:0005634">
    <property type="term" value="C:nucleus"/>
    <property type="evidence" value="ECO:0000314"/>
    <property type="project" value="MGI"/>
</dbReference>
<dbReference type="GO" id="GO:0005886">
    <property type="term" value="C:plasma membrane"/>
    <property type="evidence" value="ECO:0007669"/>
    <property type="project" value="UniProtKB-SubCell"/>
</dbReference>
<dbReference type="GO" id="GO:0030018">
    <property type="term" value="C:Z disc"/>
    <property type="evidence" value="ECO:0007669"/>
    <property type="project" value="UniProtKB-SubCell"/>
</dbReference>
<dbReference type="GO" id="GO:0003779">
    <property type="term" value="F:actin binding"/>
    <property type="evidence" value="ECO:0000314"/>
    <property type="project" value="MGI"/>
</dbReference>
<dbReference type="GO" id="GO:0004860">
    <property type="term" value="F:protein kinase inhibitor activity"/>
    <property type="evidence" value="ECO:0000250"/>
    <property type="project" value="UniProtKB"/>
</dbReference>
<dbReference type="GO" id="GO:0030036">
    <property type="term" value="P:actin cytoskeleton organization"/>
    <property type="evidence" value="ECO:0007669"/>
    <property type="project" value="InterPro"/>
</dbReference>
<dbReference type="GO" id="GO:0070252">
    <property type="term" value="P:actin-mediated cell contraction"/>
    <property type="evidence" value="ECO:0000315"/>
    <property type="project" value="UniProtKB"/>
</dbReference>
<dbReference type="GO" id="GO:0007155">
    <property type="term" value="P:cell adhesion"/>
    <property type="evidence" value="ECO:0000314"/>
    <property type="project" value="MGI"/>
</dbReference>
<dbReference type="GO" id="GO:0060271">
    <property type="term" value="P:cilium assembly"/>
    <property type="evidence" value="ECO:0000250"/>
    <property type="project" value="UniProtKB"/>
</dbReference>
<dbReference type="GO" id="GO:0007163">
    <property type="term" value="P:establishment or maintenance of cell polarity"/>
    <property type="evidence" value="ECO:0000315"/>
    <property type="project" value="UniProtKB"/>
</dbReference>
<dbReference type="GO" id="GO:0034113">
    <property type="term" value="P:heterotypic cell-cell adhesion"/>
    <property type="evidence" value="ECO:0000315"/>
    <property type="project" value="UniProtKB"/>
</dbReference>
<dbReference type="GO" id="GO:0003148">
    <property type="term" value="P:outflow tract septum morphogenesis"/>
    <property type="evidence" value="ECO:0000315"/>
    <property type="project" value="UniProtKB"/>
</dbReference>
<dbReference type="GO" id="GO:0008360">
    <property type="term" value="P:regulation of cell shape"/>
    <property type="evidence" value="ECO:0007669"/>
    <property type="project" value="UniProtKB-KW"/>
</dbReference>
<dbReference type="GO" id="GO:0071670">
    <property type="term" value="P:smooth muscle cell chemotaxis"/>
    <property type="evidence" value="ECO:0000315"/>
    <property type="project" value="UniProtKB"/>
</dbReference>
<dbReference type="GO" id="GO:0002040">
    <property type="term" value="P:sprouting angiogenesis"/>
    <property type="evidence" value="ECO:0000315"/>
    <property type="project" value="UniProtKB"/>
</dbReference>
<dbReference type="GO" id="GO:0034446">
    <property type="term" value="P:substrate adhesion-dependent cell spreading"/>
    <property type="evidence" value="ECO:0000315"/>
    <property type="project" value="UniProtKB"/>
</dbReference>
<dbReference type="CDD" id="cd21335">
    <property type="entry name" value="CH_PARVA_rpt1"/>
    <property type="match status" value="1"/>
</dbReference>
<dbReference type="CDD" id="cd21337">
    <property type="entry name" value="CH_PARVA_rpt2"/>
    <property type="match status" value="1"/>
</dbReference>
<dbReference type="FunFam" id="1.10.418.10:FF:000015">
    <property type="entry name" value="Parvin beta"/>
    <property type="match status" value="1"/>
</dbReference>
<dbReference type="FunFam" id="1.10.418.10:FF:000011">
    <property type="entry name" value="Parvin, beta"/>
    <property type="match status" value="1"/>
</dbReference>
<dbReference type="Gene3D" id="1.10.418.10">
    <property type="entry name" value="Calponin-like domain"/>
    <property type="match status" value="2"/>
</dbReference>
<dbReference type="InterPro" id="IPR001715">
    <property type="entry name" value="CH_dom"/>
</dbReference>
<dbReference type="InterPro" id="IPR036872">
    <property type="entry name" value="CH_dom_sf"/>
</dbReference>
<dbReference type="InterPro" id="IPR028433">
    <property type="entry name" value="Parvin"/>
</dbReference>
<dbReference type="PANTHER" id="PTHR12114:SF6">
    <property type="entry name" value="ALPHA-PARVIN"/>
    <property type="match status" value="1"/>
</dbReference>
<dbReference type="PANTHER" id="PTHR12114">
    <property type="entry name" value="PARVIN"/>
    <property type="match status" value="1"/>
</dbReference>
<dbReference type="Pfam" id="PF00307">
    <property type="entry name" value="CH"/>
    <property type="match status" value="2"/>
</dbReference>
<dbReference type="PIRSF" id="PIRSF039131">
    <property type="entry name" value="Parvin"/>
    <property type="match status" value="1"/>
</dbReference>
<dbReference type="SMART" id="SM00033">
    <property type="entry name" value="CH"/>
    <property type="match status" value="2"/>
</dbReference>
<dbReference type="SUPFAM" id="SSF47576">
    <property type="entry name" value="Calponin-homology domain, CH-domain"/>
    <property type="match status" value="1"/>
</dbReference>
<dbReference type="PROSITE" id="PS50021">
    <property type="entry name" value="CH"/>
    <property type="match status" value="2"/>
</dbReference>
<reference key="1">
    <citation type="journal article" date="2001" name="J. Cell Sci.">
        <title>Parvin, a 42 kDa focal adhesion protein, related to the alpha-actinin superfamily.</title>
        <authorList>
            <person name="Olski T.M."/>
            <person name="Noegel A.A."/>
            <person name="Korenbaum E."/>
        </authorList>
    </citation>
    <scope>NUCLEOTIDE SEQUENCE [MRNA]</scope>
</reference>
<reference key="2">
    <citation type="journal article" date="2000" name="J. Cell Biol.">
        <title>Actopaxin, a new focal adhesion protein that binds paxillin LD motifs and actin and regulates cell adhesion.</title>
        <authorList>
            <person name="Nikolopoulos S.N."/>
            <person name="Turner C.E."/>
        </authorList>
    </citation>
    <scope>NUCLEOTIDE SEQUENCE [MRNA]</scope>
    <scope>FUNCTION</scope>
    <scope>SUBCELLULAR LOCATION</scope>
    <scope>INTERACTION WITH ACTIN; PXN AND TGFB1I1</scope>
</reference>
<reference key="3">
    <citation type="submission" date="2000-06" db="EMBL/GenBank/DDBJ databases">
        <title>Isolation of full-length cDNA clones from mouse brain cDNA library made by oligo-capping method.</title>
        <authorList>
            <person name="Osada N."/>
            <person name="Kusuda J."/>
            <person name="Tanuma R."/>
            <person name="Ito A."/>
            <person name="Hirata M."/>
            <person name="Sugano S."/>
            <person name="Hashimoto K."/>
        </authorList>
    </citation>
    <scope>NUCLEOTIDE SEQUENCE [LARGE SCALE MRNA]</scope>
    <source>
        <strain>C57BL/6J</strain>
        <tissue>Brain</tissue>
    </source>
</reference>
<reference key="4">
    <citation type="journal article" date="2004" name="Genome Res.">
        <title>The status, quality, and expansion of the NIH full-length cDNA project: the Mammalian Gene Collection (MGC).</title>
        <authorList>
            <consortium name="The MGC Project Team"/>
        </authorList>
    </citation>
    <scope>NUCLEOTIDE SEQUENCE [LARGE SCALE MRNA]</scope>
    <source>
        <strain>C57BL/6J</strain>
        <tissue>Brain</tissue>
    </source>
</reference>
<reference key="5">
    <citation type="journal article" date="2006" name="Curr. Biol.">
        <title>CdGAP associates with actopaxin to regulate integrin-dependent changes in cell morphology and motility.</title>
        <authorList>
            <person name="LaLonde D.P."/>
            <person name="Grubinger M."/>
            <person name="Lamarche-Vane N."/>
            <person name="Turner C.E."/>
        </authorList>
    </citation>
    <scope>INTERACTION WITH ARHGAP31</scope>
</reference>
<reference key="6">
    <citation type="journal article" date="2009" name="EMBO J.">
        <title>Alpha-parvin controls vascular mural cell recruitment to vessel wall by regulating RhoA/ROCK signalling.</title>
        <authorList>
            <person name="Montanez E."/>
            <person name="Wickstrom S.A."/>
            <person name="Altstatter J."/>
            <person name="Chu H."/>
            <person name="Fassler R."/>
        </authorList>
    </citation>
    <scope>DISRUPTION PHENOTYPE</scope>
    <scope>FUNCTION</scope>
    <scope>SUBCELLULAR LOCATION</scope>
</reference>
<reference key="7">
    <citation type="journal article" date="2009" name="Mol. Cell. Proteomics">
        <title>Large scale localization of protein phosphorylation by use of electron capture dissociation mass spectrometry.</title>
        <authorList>
            <person name="Sweet S.M."/>
            <person name="Bailey C.M."/>
            <person name="Cunningham D.L."/>
            <person name="Heath J.K."/>
            <person name="Cooper H.J."/>
        </authorList>
    </citation>
    <scope>ACETYLATION [LARGE SCALE ANALYSIS] AT ALA-2</scope>
    <scope>PHOSPHORYLATION [LARGE SCALE ANALYSIS] AT SER-8; SER-14 AND SER-19</scope>
    <scope>CLEAVAGE OF INITIATOR METHIONINE [LARGE SCALE ANALYSIS]</scope>
    <scope>IDENTIFICATION BY MASS SPECTROMETRY [LARGE SCALE ANALYSIS]</scope>
    <source>
        <tissue>Embryonic fibroblast</tissue>
    </source>
</reference>
<reference key="8">
    <citation type="journal article" date="2010" name="Cell">
        <title>A tissue-specific atlas of mouse protein phosphorylation and expression.</title>
        <authorList>
            <person name="Huttlin E.L."/>
            <person name="Jedrychowski M.P."/>
            <person name="Elias J.E."/>
            <person name="Goswami T."/>
            <person name="Rad R."/>
            <person name="Beausoleil S.A."/>
            <person name="Villen J."/>
            <person name="Haas W."/>
            <person name="Sowa M.E."/>
            <person name="Gygi S.P."/>
        </authorList>
    </citation>
    <scope>IDENTIFICATION BY MASS SPECTROMETRY [LARGE SCALE ANALYSIS]</scope>
    <source>
        <tissue>Brain</tissue>
        <tissue>Brown adipose tissue</tissue>
        <tissue>Heart</tissue>
        <tissue>Kidney</tissue>
        <tissue>Liver</tissue>
        <tissue>Lung</tissue>
        <tissue>Pancreas</tissue>
        <tissue>Spleen</tissue>
        <tissue>Testis</tissue>
    </source>
</reference>
<sequence>MATSPQKSPLVPKSPTPKSPPSRKKDDSFLGKLGGTLARRKKAKEVSEFQEEGMNAINLPLSPISFELDPEDTLLEENEVRTMVDPNSRNDPKLQELMKVLIDWINDVLVGERIIVKDLAEDLYDGQVLQKLFEKLESEKLNVAEVTQSEIAQKQKLQTVLEKINETLKLPPRSIKWNVDSVHAKNLVAILHLLVALSQYFRAPIRLPDHVSIQVVVVQKREGILQSRQIQEEITGNTEALSGRHERDAFDTLFDHAPDKLNVVKKTLITFVNKHLNKLNLEVTELETQFADGVYLVLLMGLLEGYFVPLHSFFLTPDSFEQKVLNVSFAFELMQDGGLEKPKPRPEDIVNCDLKSTLRVLYNLFTKYRNVE</sequence>
<proteinExistence type="evidence at protein level"/>
<comment type="function">
    <text evidence="1 4 6">Plays a role in sarcomere organization and in smooth muscle cell contraction. Required for normal development of the embryonic cardiovascular system, and for normal septation of the heart outflow tract. Plays a role in sprouting angiogenesis and is required for normal adhesion of vascular smooth muscle cells to endothelial cells during blood vessel development. Plays a role in the reorganization of the actin cytoskeleton, formation of lamellipodia and ciliogenesis. Plays a role in the establishment of cell polarity, cell adhesion, cell spreading, and directed cell migration. Within the IPP (ILK-PINCH-PARVIN) complex, binds to F-actin, promoting F-actin bundling, a process required to generate force for actin cytoskeleton reorganization and subsequent dynamic cell adhesion events such as cell spreading and migration (By similarity).</text>
</comment>
<comment type="subunit">
    <text evidence="1 4 5">Component of the heterotrimeric IPP (ILK-PINCH-PARVIN) complex composed of ILK, LIMS1/PINCH and PARVA; the complex binds to F-actin via the C-terminal tail of LIMS1 and the N-terminal region of PARVA, promoting F-actin filament bundling (By similarity). Interacts with TGFB1I1 (PubMed:11134073). Interacts with ARHGAP31 (PubMed:16860736). Interacts with the actin cytoskeleton (PubMed:11134073). Interacts (via C-terminus) with TESK1 (via C-terminus); the interaction inhibits TESK1 kinase activity (By similarity). Interacts with PXN/PAXILLIN (via LD motif 4) (PubMed:11134073).</text>
</comment>
<comment type="interaction">
    <interactant intactId="EBI-6690233">
        <id>Q9EPC1</id>
    </interactant>
    <interactant intactId="EBI-6690138">
        <id>O55222</id>
        <label>Ilk</label>
    </interactant>
    <organismsDiffer>false</organismsDiffer>
    <experiments>7</experiments>
</comment>
<comment type="subcellular location">
    <subcellularLocation>
        <location>Cell junction</location>
        <location>Focal adhesion</location>
    </subcellularLocation>
    <subcellularLocation>
        <location>Cell membrane</location>
        <topology>Peripheral membrane protein</topology>
        <orientation>Cytoplasmic side</orientation>
    </subcellularLocation>
    <subcellularLocation>
        <location>Cytoplasm</location>
        <location>Cytoskeleton</location>
    </subcellularLocation>
    <subcellularLocation>
        <location>Cytoplasm</location>
        <location>Myofibril</location>
        <location>Sarcomere</location>
        <location>Z line</location>
    </subcellularLocation>
</comment>
<comment type="disruption phenotype">
    <text evidence="6">Embryonic lethality, due to severe cardiovascular defects causing whole body edema and severe bleeding due to vessel rupture. Embryos show defects in the septation of the heart outflow tract. Their cardiomyocytes are round and fail to align in a parallel manner. Blood vessels are frequently enlarged and show numerous microaneurisms. Besides, blood vessels show abnormal constrictions and increased vascular sprouting. Vascular mural cells and pericytes display a rounded shape and impaired adhesion to the underlying vascular endothelium. Cells display highly dynamic formation of membrane ruffles with increased random motility, but impaired chemotaxis.</text>
</comment>
<comment type="similarity">
    <text evidence="7">Belongs to the parvin family.</text>
</comment>